<evidence type="ECO:0000255" key="1">
    <source>
        <dbReference type="HAMAP-Rule" id="MF_03029"/>
    </source>
</evidence>
<evidence type="ECO:0000256" key="2">
    <source>
        <dbReference type="SAM" id="MobiDB-lite"/>
    </source>
</evidence>
<reference key="1">
    <citation type="journal article" date="2009" name="Genome Res.">
        <title>Comparative genomic analyses of the human fungal pathogens Coccidioides and their relatives.</title>
        <authorList>
            <person name="Sharpton T.J."/>
            <person name="Stajich J.E."/>
            <person name="Rounsley S.D."/>
            <person name="Gardner M.J."/>
            <person name="Wortman J.R."/>
            <person name="Jordar V.S."/>
            <person name="Maiti R."/>
            <person name="Kodira C.D."/>
            <person name="Neafsey D.E."/>
            <person name="Zeng Q."/>
            <person name="Hung C.-Y."/>
            <person name="McMahan C."/>
            <person name="Muszewska A."/>
            <person name="Grynberg M."/>
            <person name="Mandel M.A."/>
            <person name="Kellner E.M."/>
            <person name="Barker B.M."/>
            <person name="Galgiani J.N."/>
            <person name="Orbach M.J."/>
            <person name="Kirkland T.N."/>
            <person name="Cole G.T."/>
            <person name="Henn M.R."/>
            <person name="Birren B.W."/>
            <person name="Taylor J.W."/>
        </authorList>
    </citation>
    <scope>NUCLEOTIDE SEQUENCE [LARGE SCALE GENOMIC DNA]</scope>
    <source>
        <strain>NAm1 / WU24</strain>
    </source>
</reference>
<gene>
    <name evidence="1" type="primary">YTM1</name>
    <name type="ORF">HCAG_04213</name>
</gene>
<protein>
    <recommendedName>
        <fullName evidence="1">Ribosome biogenesis protein YTM1</fullName>
    </recommendedName>
</protein>
<name>YTM1_AJECN</name>
<comment type="function">
    <text evidence="1">Component of the NOP7 complex, which is required for maturation of the 25S and 5.8S ribosomal RNAs and formation of the 60S ribosome.</text>
</comment>
<comment type="subunit">
    <text evidence="1">Component of the NOP7 complex, composed of ERB1, NOP7 and YTM1. The complex is held together by ERB1, which interacts with NOP7 via its N-terminal domain and with YTM1 via a high-affinity interaction between the seven-bladed beta-propeller domains of the 2 proteins. The NOP7 complex associates with the 66S pre-ribosome. Interacts (via UBL domain) with MDN1 (via VWFA/MIDAS domain).</text>
</comment>
<comment type="subcellular location">
    <subcellularLocation>
        <location evidence="1">Nucleus</location>
        <location evidence="1">Nucleolus</location>
    </subcellularLocation>
    <subcellularLocation>
        <location evidence="1">Nucleus</location>
        <location evidence="1">Nucleoplasm</location>
    </subcellularLocation>
</comment>
<comment type="similarity">
    <text evidence="1">Belongs to the WD repeat WDR12/YTM1 family.</text>
</comment>
<dbReference type="EMBL" id="CH476658">
    <property type="protein sequence ID" value="EDN07703.1"/>
    <property type="molecule type" value="Genomic_DNA"/>
</dbReference>
<dbReference type="SMR" id="A6R3K5"/>
<dbReference type="STRING" id="339724.A6R3K5"/>
<dbReference type="KEGG" id="aje:HCAG_04213"/>
<dbReference type="VEuPathDB" id="FungiDB:HCAG_04213"/>
<dbReference type="HOGENOM" id="CLU_000288_57_0_1"/>
<dbReference type="OMA" id="DHKYVEF"/>
<dbReference type="OrthoDB" id="4888at299071"/>
<dbReference type="Proteomes" id="UP000009297">
    <property type="component" value="Unassembled WGS sequence"/>
</dbReference>
<dbReference type="GO" id="GO:0005654">
    <property type="term" value="C:nucleoplasm"/>
    <property type="evidence" value="ECO:0007669"/>
    <property type="project" value="UniProtKB-SubCell"/>
</dbReference>
<dbReference type="GO" id="GO:0070545">
    <property type="term" value="C:PeBoW complex"/>
    <property type="evidence" value="ECO:0007669"/>
    <property type="project" value="TreeGrafter"/>
</dbReference>
<dbReference type="GO" id="GO:0030687">
    <property type="term" value="C:preribosome, large subunit precursor"/>
    <property type="evidence" value="ECO:0007669"/>
    <property type="project" value="UniProtKB-UniRule"/>
</dbReference>
<dbReference type="GO" id="GO:0043021">
    <property type="term" value="F:ribonucleoprotein complex binding"/>
    <property type="evidence" value="ECO:0007669"/>
    <property type="project" value="UniProtKB-UniRule"/>
</dbReference>
<dbReference type="GO" id="GO:0000466">
    <property type="term" value="P:maturation of 5.8S rRNA from tricistronic rRNA transcript (SSU-rRNA, 5.8S rRNA, LSU-rRNA)"/>
    <property type="evidence" value="ECO:0007669"/>
    <property type="project" value="UniProtKB-UniRule"/>
</dbReference>
<dbReference type="GO" id="GO:0000463">
    <property type="term" value="P:maturation of LSU-rRNA from tricistronic rRNA transcript (SSU-rRNA, 5.8S rRNA, LSU-rRNA)"/>
    <property type="evidence" value="ECO:0007669"/>
    <property type="project" value="UniProtKB-UniRule"/>
</dbReference>
<dbReference type="CDD" id="cd00200">
    <property type="entry name" value="WD40"/>
    <property type="match status" value="1"/>
</dbReference>
<dbReference type="FunFam" id="2.130.10.10:FF:000593">
    <property type="entry name" value="Ribosome biogenesis protein ytm1"/>
    <property type="match status" value="1"/>
</dbReference>
<dbReference type="Gene3D" id="2.130.10.10">
    <property type="entry name" value="YVTN repeat-like/Quinoprotein amine dehydrogenase"/>
    <property type="match status" value="1"/>
</dbReference>
<dbReference type="HAMAP" id="MF_03029">
    <property type="entry name" value="WDR12"/>
    <property type="match status" value="1"/>
</dbReference>
<dbReference type="InterPro" id="IPR020472">
    <property type="entry name" value="G-protein_beta_WD-40_rep"/>
</dbReference>
<dbReference type="InterPro" id="IPR012972">
    <property type="entry name" value="NLE"/>
</dbReference>
<dbReference type="InterPro" id="IPR015943">
    <property type="entry name" value="WD40/YVTN_repeat-like_dom_sf"/>
</dbReference>
<dbReference type="InterPro" id="IPR019775">
    <property type="entry name" value="WD40_repeat_CS"/>
</dbReference>
<dbReference type="InterPro" id="IPR036322">
    <property type="entry name" value="WD40_repeat_dom_sf"/>
</dbReference>
<dbReference type="InterPro" id="IPR001680">
    <property type="entry name" value="WD40_rpt"/>
</dbReference>
<dbReference type="InterPro" id="IPR028599">
    <property type="entry name" value="WDR12/Ytm1"/>
</dbReference>
<dbReference type="PANTHER" id="PTHR19855:SF11">
    <property type="entry name" value="RIBOSOME BIOGENESIS PROTEIN WDR12"/>
    <property type="match status" value="1"/>
</dbReference>
<dbReference type="PANTHER" id="PTHR19855">
    <property type="entry name" value="WD40 REPEAT PROTEIN 12, 37"/>
    <property type="match status" value="1"/>
</dbReference>
<dbReference type="Pfam" id="PF08154">
    <property type="entry name" value="NLE"/>
    <property type="match status" value="1"/>
</dbReference>
<dbReference type="Pfam" id="PF00400">
    <property type="entry name" value="WD40"/>
    <property type="match status" value="5"/>
</dbReference>
<dbReference type="PRINTS" id="PR00320">
    <property type="entry name" value="GPROTEINBRPT"/>
</dbReference>
<dbReference type="SMART" id="SM00320">
    <property type="entry name" value="WD40"/>
    <property type="match status" value="6"/>
</dbReference>
<dbReference type="SUPFAM" id="SSF50978">
    <property type="entry name" value="WD40 repeat-like"/>
    <property type="match status" value="1"/>
</dbReference>
<dbReference type="PROSITE" id="PS00678">
    <property type="entry name" value="WD_REPEATS_1"/>
    <property type="match status" value="2"/>
</dbReference>
<dbReference type="PROSITE" id="PS50082">
    <property type="entry name" value="WD_REPEATS_2"/>
    <property type="match status" value="4"/>
</dbReference>
<dbReference type="PROSITE" id="PS50294">
    <property type="entry name" value="WD_REPEATS_REGION"/>
    <property type="match status" value="1"/>
</dbReference>
<feature type="chain" id="PRO_0000369572" description="Ribosome biogenesis protein YTM1">
    <location>
        <begin position="1"/>
        <end position="490"/>
    </location>
</feature>
<feature type="repeat" description="WD 1">
    <location>
        <begin position="116"/>
        <end position="168"/>
    </location>
</feature>
<feature type="repeat" description="WD 2">
    <location>
        <begin position="175"/>
        <end position="213"/>
    </location>
</feature>
<feature type="repeat" description="WD 3">
    <location>
        <begin position="224"/>
        <end position="263"/>
    </location>
</feature>
<feature type="repeat" description="WD 4">
    <location>
        <begin position="298"/>
        <end position="338"/>
    </location>
</feature>
<feature type="repeat" description="WD 5">
    <location>
        <begin position="340"/>
        <end position="379"/>
    </location>
</feature>
<feature type="repeat" description="WD 6">
    <location>
        <begin position="385"/>
        <end position="425"/>
    </location>
</feature>
<feature type="repeat" description="WD 7">
    <location>
        <begin position="449"/>
        <end position="487"/>
    </location>
</feature>
<feature type="region of interest" description="Disordered" evidence="2">
    <location>
        <begin position="1"/>
        <end position="22"/>
    </location>
</feature>
<feature type="region of interest" description="Ubiquitin-like (UBL) domain" evidence="1">
    <location>
        <begin position="23"/>
        <end position="104"/>
    </location>
</feature>
<feature type="region of interest" description="Disordered" evidence="2">
    <location>
        <begin position="255"/>
        <end position="286"/>
    </location>
</feature>
<accession>A6R3K5</accession>
<organism>
    <name type="scientific">Ajellomyces capsulatus (strain NAm1 / WU24)</name>
    <name type="common">Darling's disease fungus</name>
    <name type="synonym">Histoplasma capsulatum</name>
    <dbReference type="NCBI Taxonomy" id="2059318"/>
    <lineage>
        <taxon>Eukaryota</taxon>
        <taxon>Fungi</taxon>
        <taxon>Dikarya</taxon>
        <taxon>Ascomycota</taxon>
        <taxon>Pezizomycotina</taxon>
        <taxon>Eurotiomycetes</taxon>
        <taxon>Eurotiomycetidae</taxon>
        <taxon>Onygenales</taxon>
        <taxon>Ajellomycetaceae</taxon>
        <taxon>Histoplasma</taxon>
    </lineage>
</organism>
<sequence length="490" mass="52709">MDGLEDGPLDASTATSQKPQRQVRLKLTSRHEDIALPESTGPILVPTGLRRYALSTLVNNLLESEKPIPFEFLINGTYLRTSIDEYLTANGISAETTLDVEYVRALVPPLHVASFLHDDWVSAVDVLSDTSIAGSKSRVNAGQERILSASYDGLLRMWNMSSETIALSPAAREGGHTASVKCARMVSPSQIISSGLDRTVRLWKYTESEDGFSASITPQLELYGHKGSVDSISMHAQSHRILSASADHSVGFWSTRKSENPAAPESLLPSNTSRSSKRRKLNSSVSVPQRGPLALFKSHTAPVSAAIFDAKDPTVGYSTSWDHSLRTWDLVTGTLVDTRTASHSLLSVSHMPELSLLASGTSARHITLIDPRASATTVSALTLRGHTNAVVCLARDPDSTYGLISGSHDGTCRIWDVRSTRTDKDGVMGESIYSIPRKSVGGAGKRVGGEGVKVFDVCWDKSVGIVSSGEDKMIQINRGEGVLPNGGSDR</sequence>
<proteinExistence type="inferred from homology"/>
<keyword id="KW-0539">Nucleus</keyword>
<keyword id="KW-1185">Reference proteome</keyword>
<keyword id="KW-0677">Repeat</keyword>
<keyword id="KW-0690">Ribosome biogenesis</keyword>
<keyword id="KW-0698">rRNA processing</keyword>
<keyword id="KW-0853">WD repeat</keyword>